<dbReference type="EMBL" id="U28379">
    <property type="protein sequence ID" value="AAA89140.1"/>
    <property type="molecule type" value="Genomic_DNA"/>
</dbReference>
<dbReference type="EMBL" id="U00096">
    <property type="protein sequence ID" value="AAC76096.1"/>
    <property type="molecule type" value="Genomic_DNA"/>
</dbReference>
<dbReference type="EMBL" id="AP009048">
    <property type="protein sequence ID" value="BAE77111.1"/>
    <property type="molecule type" value="Genomic_DNA"/>
</dbReference>
<dbReference type="EMBL" id="L14781">
    <property type="status" value="NOT_ANNOTATED_CDS"/>
    <property type="molecule type" value="Unassigned_DNA"/>
</dbReference>
<dbReference type="PIR" id="B65094">
    <property type="entry name" value="B65094"/>
</dbReference>
<dbReference type="RefSeq" id="NP_417532.1">
    <property type="nucleotide sequence ID" value="NC_000913.3"/>
</dbReference>
<dbReference type="RefSeq" id="WP_000935206.1">
    <property type="nucleotide sequence ID" value="NZ_STEB01000001.1"/>
</dbReference>
<dbReference type="SMR" id="P45463"/>
<dbReference type="BioGRID" id="4263515">
    <property type="interactions" value="91"/>
</dbReference>
<dbReference type="DIP" id="DIP-12223N"/>
<dbReference type="FunCoup" id="P45463">
    <property type="interactions" value="93"/>
</dbReference>
<dbReference type="IntAct" id="P45463">
    <property type="interactions" value="6"/>
</dbReference>
<dbReference type="STRING" id="511145.b3060"/>
<dbReference type="jPOST" id="P45463"/>
<dbReference type="PaxDb" id="511145-b3060"/>
<dbReference type="EnsemblBacteria" id="AAC76096">
    <property type="protein sequence ID" value="AAC76096"/>
    <property type="gene ID" value="b3060"/>
</dbReference>
<dbReference type="GeneID" id="93778933"/>
<dbReference type="GeneID" id="947562"/>
<dbReference type="KEGG" id="ecj:JW3032"/>
<dbReference type="KEGG" id="eco:b3060"/>
<dbReference type="KEGG" id="ecoc:C3026_16720"/>
<dbReference type="PATRIC" id="fig|1411691.4.peg.3671"/>
<dbReference type="EchoBASE" id="EB2557"/>
<dbReference type="eggNOG" id="COG0583">
    <property type="taxonomic scope" value="Bacteria"/>
</dbReference>
<dbReference type="HOGENOM" id="CLU_039613_16_4_6"/>
<dbReference type="InParanoid" id="P45463"/>
<dbReference type="OMA" id="CRIGFSY"/>
<dbReference type="OrthoDB" id="8885940at2"/>
<dbReference type="PhylomeDB" id="P45463"/>
<dbReference type="BioCyc" id="EcoCyc:EG12694-MONOMER"/>
<dbReference type="PRO" id="PR:P45463"/>
<dbReference type="Proteomes" id="UP000000625">
    <property type="component" value="Chromosome"/>
</dbReference>
<dbReference type="GO" id="GO:0001216">
    <property type="term" value="F:DNA-binding transcription activator activity"/>
    <property type="evidence" value="ECO:0000315"/>
    <property type="project" value="EcoliWiki"/>
</dbReference>
<dbReference type="GO" id="GO:0003700">
    <property type="term" value="F:DNA-binding transcription factor activity"/>
    <property type="evidence" value="ECO:0000314"/>
    <property type="project" value="EcoCyc"/>
</dbReference>
<dbReference type="GO" id="GO:0043565">
    <property type="term" value="F:sequence-specific DNA binding"/>
    <property type="evidence" value="ECO:0000318"/>
    <property type="project" value="GO_Central"/>
</dbReference>
<dbReference type="GO" id="GO:0006351">
    <property type="term" value="P:DNA-templated transcription"/>
    <property type="evidence" value="ECO:0000318"/>
    <property type="project" value="GO_Central"/>
</dbReference>
<dbReference type="GO" id="GO:0045893">
    <property type="term" value="P:positive regulation of DNA-templated transcription"/>
    <property type="evidence" value="ECO:0000314"/>
    <property type="project" value="EcoCyc"/>
</dbReference>
<dbReference type="CDD" id="cd08479">
    <property type="entry name" value="PBP2_CrgA_like_9"/>
    <property type="match status" value="1"/>
</dbReference>
<dbReference type="FunFam" id="1.10.10.10:FF:000238">
    <property type="entry name" value="HTH-type transcriptional activator TtdR"/>
    <property type="match status" value="1"/>
</dbReference>
<dbReference type="FunFam" id="3.40.190.290:FF:000001">
    <property type="entry name" value="Transcriptional regulator, LysR family"/>
    <property type="match status" value="1"/>
</dbReference>
<dbReference type="Gene3D" id="3.40.190.290">
    <property type="match status" value="1"/>
</dbReference>
<dbReference type="Gene3D" id="1.10.10.10">
    <property type="entry name" value="Winged helix-like DNA-binding domain superfamily/Winged helix DNA-binding domain"/>
    <property type="match status" value="1"/>
</dbReference>
<dbReference type="InterPro" id="IPR005119">
    <property type="entry name" value="LysR_subst-bd"/>
</dbReference>
<dbReference type="InterPro" id="IPR000847">
    <property type="entry name" value="Tscrpt_reg_HTH_LysR"/>
</dbReference>
<dbReference type="InterPro" id="IPR036388">
    <property type="entry name" value="WH-like_DNA-bd_sf"/>
</dbReference>
<dbReference type="InterPro" id="IPR036390">
    <property type="entry name" value="WH_DNA-bd_sf"/>
</dbReference>
<dbReference type="NCBIfam" id="NF007315">
    <property type="entry name" value="PRK09801.1"/>
    <property type="match status" value="1"/>
</dbReference>
<dbReference type="PANTHER" id="PTHR30537:SF5">
    <property type="entry name" value="HTH-TYPE TRANSCRIPTIONAL ACTIVATOR TTDR-RELATED"/>
    <property type="match status" value="1"/>
</dbReference>
<dbReference type="PANTHER" id="PTHR30537">
    <property type="entry name" value="HTH-TYPE TRANSCRIPTIONAL REGULATOR"/>
    <property type="match status" value="1"/>
</dbReference>
<dbReference type="Pfam" id="PF00126">
    <property type="entry name" value="HTH_1"/>
    <property type="match status" value="1"/>
</dbReference>
<dbReference type="Pfam" id="PF03466">
    <property type="entry name" value="LysR_substrate"/>
    <property type="match status" value="1"/>
</dbReference>
<dbReference type="SUPFAM" id="SSF53850">
    <property type="entry name" value="Periplasmic binding protein-like II"/>
    <property type="match status" value="1"/>
</dbReference>
<dbReference type="SUPFAM" id="SSF46785">
    <property type="entry name" value="Winged helix' DNA-binding domain"/>
    <property type="match status" value="1"/>
</dbReference>
<dbReference type="PROSITE" id="PS50931">
    <property type="entry name" value="HTH_LYSR"/>
    <property type="match status" value="1"/>
</dbReference>
<feature type="chain" id="PRO_0000105795" description="HTH-type transcriptional activator TtdR">
    <location>
        <begin position="1"/>
        <end position="310"/>
    </location>
</feature>
<feature type="domain" description="HTH lysR-type" evidence="1">
    <location>
        <begin position="6"/>
        <end position="63"/>
    </location>
</feature>
<feature type="DNA-binding region" description="H-T-H motif" evidence="1">
    <location>
        <begin position="23"/>
        <end position="42"/>
    </location>
</feature>
<evidence type="ECO:0000255" key="1">
    <source>
        <dbReference type="PROSITE-ProRule" id="PRU00253"/>
    </source>
</evidence>
<evidence type="ECO:0000269" key="2">
    <source>
    </source>
</evidence>
<evidence type="ECO:0000305" key="3"/>
<organism>
    <name type="scientific">Escherichia coli (strain K12)</name>
    <dbReference type="NCBI Taxonomy" id="83333"/>
    <lineage>
        <taxon>Bacteria</taxon>
        <taxon>Pseudomonadati</taxon>
        <taxon>Pseudomonadota</taxon>
        <taxon>Gammaproteobacteria</taxon>
        <taxon>Enterobacterales</taxon>
        <taxon>Enterobacteriaceae</taxon>
        <taxon>Escherichia</taxon>
    </lineage>
</organism>
<gene>
    <name type="primary">ttdR</name>
    <name type="synonym">ygiP</name>
    <name type="ordered locus">b3060</name>
    <name type="ordered locus">JW3032</name>
</gene>
<name>TTDR_ECOLI</name>
<proteinExistence type="inferred from homology"/>
<comment type="function">
    <text evidence="2">Positive regulator required for L-tartrate-dependent anaerobic growth on glycerol. Induces expression of the ttdA-ttdB-ygjE operon.</text>
</comment>
<comment type="similarity">
    <text evidence="3">Belongs to the LysR transcriptional regulatory family.</text>
</comment>
<protein>
    <recommendedName>
        <fullName>HTH-type transcriptional activator TtdR</fullName>
    </recommendedName>
</protein>
<keyword id="KW-0010">Activator</keyword>
<keyword id="KW-0238">DNA-binding</keyword>
<keyword id="KW-1185">Reference proteome</keyword>
<keyword id="KW-0804">Transcription</keyword>
<keyword id="KW-0805">Transcription regulation</keyword>
<reference key="1">
    <citation type="journal article" date="1997" name="Science">
        <title>The complete genome sequence of Escherichia coli K-12.</title>
        <authorList>
            <person name="Blattner F.R."/>
            <person name="Plunkett G. III"/>
            <person name="Bloch C.A."/>
            <person name="Perna N.T."/>
            <person name="Burland V."/>
            <person name="Riley M."/>
            <person name="Collado-Vides J."/>
            <person name="Glasner J.D."/>
            <person name="Rode C.K."/>
            <person name="Mayhew G.F."/>
            <person name="Gregor J."/>
            <person name="Davis N.W."/>
            <person name="Kirkpatrick H.A."/>
            <person name="Goeden M.A."/>
            <person name="Rose D.J."/>
            <person name="Mau B."/>
            <person name="Shao Y."/>
        </authorList>
    </citation>
    <scope>NUCLEOTIDE SEQUENCE [LARGE SCALE GENOMIC DNA]</scope>
    <source>
        <strain>K12 / MG1655 / ATCC 47076</strain>
    </source>
</reference>
<reference key="2">
    <citation type="journal article" date="2006" name="Mol. Syst. Biol.">
        <title>Highly accurate genome sequences of Escherichia coli K-12 strains MG1655 and W3110.</title>
        <authorList>
            <person name="Hayashi K."/>
            <person name="Morooka N."/>
            <person name="Yamamoto Y."/>
            <person name="Fujita K."/>
            <person name="Isono K."/>
            <person name="Choi S."/>
            <person name="Ohtsubo E."/>
            <person name="Baba T."/>
            <person name="Wanner B.L."/>
            <person name="Mori H."/>
            <person name="Horiuchi T."/>
        </authorList>
    </citation>
    <scope>NUCLEOTIDE SEQUENCE [LARGE SCALE GENOMIC DNA]</scope>
    <source>
        <strain>K12 / W3110 / ATCC 27325 / DSM 5911</strain>
    </source>
</reference>
<reference key="3">
    <citation type="journal article" date="1987" name="Gene">
        <title>Possible new genes as revealed by molecular analysis of a 5-kb Escherichia coli chromosomal region 5' to the rpsU-dnaG-rpoD macromolecular-synthesis operon.</title>
        <authorList>
            <person name="Nesin M."/>
            <person name="Lupski J.R."/>
            <person name="Svec P."/>
            <person name="Godson G.N."/>
        </authorList>
    </citation>
    <scope>NUCLEOTIDE SEQUENCE [GENOMIC DNA] OF 1-41</scope>
</reference>
<reference key="4">
    <citation type="journal article" date="1993" name="J. Gen. Microbiol.">
        <title>Identification of the L-tartrate dehydratase genes (ttdA and ttdB) of Escherichia coli and evolutionary relationship with the class I fumarase genes.</title>
        <authorList>
            <person name="Reaney S.K."/>
            <person name="Begg C."/>
            <person name="Bungard S.I."/>
            <person name="Guest J.R."/>
        </authorList>
    </citation>
    <scope>NUCLEOTIDE SEQUENCE [GENOMIC DNA] OF 1-23</scope>
    <source>
        <strain>K12</strain>
    </source>
</reference>
<reference key="5">
    <citation type="journal article" date="1995" name="Nucleic Acids Res.">
        <title>Detection of new genes in a bacterial genome using Markov models for three gene classes.</title>
        <authorList>
            <person name="Borodovsky M."/>
            <person name="McIninch J."/>
            <person name="Koonin E.V."/>
            <person name="Rudd K.E."/>
            <person name="Medigue C."/>
            <person name="Danchin A."/>
        </authorList>
    </citation>
    <scope>IDENTIFICATION</scope>
</reference>
<reference key="6">
    <citation type="journal article" date="2006" name="Microbiology">
        <title>Functional identification of ygiP as a positive regulator of the ttdA-ttdB-ygjE operon.</title>
        <authorList>
            <person name="Oshima T."/>
            <person name="Biville F."/>
        </authorList>
    </citation>
    <scope>FUNCTION</scope>
</reference>
<sequence length="310" mass="35315">MLNSWPLAKDLQVLVEIVHSGSFSAAAATLGQTPAFVTKRIQILENTLATTLLNRSARGVALTESGQRCYEHALEILTQYQRLVDDVTQIKTRPEGMIRIGCSFGFGRSHIAPAITELMRNYPELQVHFELFDRQIDLVQDNIDLDIRINDEIPDYYIAHLLTKNKRILCAAPEYLQKYPQPQSLQELSRHDCLVTKERDMTHGIWELGNGQEKKSVKVSGHLSSNSGEIVLQWALEGKGIMLRSEWDVLPFLESGKLVQVLPEYAQSANIWAVYREPLYRSMKLRVCVEFLAAWCQQRLGKPDEGYQVM</sequence>
<accession>P45463</accession>
<accession>Q2M9E5</accession>